<protein>
    <recommendedName>
        <fullName>Pre-rRNA-processing protein PNO1</fullName>
    </recommendedName>
    <alternativeName>
        <fullName>Partner of NOB1</fullName>
    </alternativeName>
    <alternativeName>
        <fullName>Ribosomal RNA-processing protein 20</fullName>
    </alternativeName>
</protein>
<sequence>MVAPTALKKATVTPVSGQDGGSSRIIGINNTESIDEDDDDDVLLDDSDNNTAKEEVEGEEGSRKTHESKTVVVDDQGKPRFTSASKTQGNKIKFESRKIMVPPHRMTPLRNSWTKIYPPLVEHLKLQVRMNLKTKSVELRTNPKFTTDPGALQKGADFIKAFTLGFDLDDSIALLRLDDLYIETFEVKDVKTLTGDHLSRAIGRIAGKDGKTKFAIENATRTRIVLADSKIHILGGFTHIRMARESVVSLILGSPPGKVYGNLRTVASRLKERY</sequence>
<keyword id="KW-0002">3D-structure</keyword>
<keyword id="KW-0963">Cytoplasm</keyword>
<keyword id="KW-0539">Nucleus</keyword>
<keyword id="KW-0597">Phosphoprotein</keyword>
<keyword id="KW-1185">Reference proteome</keyword>
<keyword id="KW-0690">Ribosome biogenesis</keyword>
<keyword id="KW-0694">RNA-binding</keyword>
<feature type="chain" id="PRO_0000270553" description="Pre-rRNA-processing protein PNO1">
    <location>
        <begin position="1"/>
        <end position="274"/>
    </location>
</feature>
<feature type="domain" description="KH">
    <location>
        <begin position="195"/>
        <end position="247"/>
    </location>
</feature>
<feature type="region of interest" description="Disordered" evidence="1">
    <location>
        <begin position="1"/>
        <end position="70"/>
    </location>
</feature>
<feature type="compositionally biased region" description="Acidic residues" evidence="1">
    <location>
        <begin position="33"/>
        <end position="48"/>
    </location>
</feature>
<feature type="compositionally biased region" description="Basic and acidic residues" evidence="1">
    <location>
        <begin position="51"/>
        <end position="69"/>
    </location>
</feature>
<feature type="modified residue" description="Phosphoserine" evidence="8">
    <location>
        <position position="47"/>
    </location>
</feature>
<feature type="modified residue" description="Phosphothreonine" evidence="8">
    <location>
        <position position="51"/>
    </location>
</feature>
<feature type="mutagenesis site" description="Temperature-sensitive." evidence="3">
    <original>G</original>
    <variation>D</variation>
    <location>
        <position position="203"/>
    </location>
</feature>
<feature type="mutagenesis site" description="Accumulation of aberrant 22S and 23S rRNA intermediates." evidence="5">
    <original>G</original>
    <variation>D</variation>
    <location>
        <position position="235"/>
    </location>
</feature>
<feature type="strand" evidence="10">
    <location>
        <begin position="95"/>
        <end position="100"/>
    </location>
</feature>
<feature type="helix" evidence="10">
    <location>
        <begin position="103"/>
        <end position="123"/>
    </location>
</feature>
<feature type="strand" evidence="10">
    <location>
        <begin position="127"/>
        <end position="131"/>
    </location>
</feature>
<feature type="turn" evidence="10">
    <location>
        <begin position="132"/>
        <end position="135"/>
    </location>
</feature>
<feature type="strand" evidence="10">
    <location>
        <begin position="136"/>
        <end position="141"/>
    </location>
</feature>
<feature type="turn" evidence="9">
    <location>
        <begin position="143"/>
        <end position="145"/>
    </location>
</feature>
<feature type="helix" evidence="10">
    <location>
        <begin position="151"/>
        <end position="164"/>
    </location>
</feature>
<feature type="helix" evidence="10">
    <location>
        <begin position="168"/>
        <end position="171"/>
    </location>
</feature>
<feature type="helix" evidence="10">
    <location>
        <begin position="173"/>
        <end position="176"/>
    </location>
</feature>
<feature type="strand" evidence="10">
    <location>
        <begin position="181"/>
        <end position="186"/>
    </location>
</feature>
<feature type="helix" evidence="10">
    <location>
        <begin position="187"/>
        <end position="189"/>
    </location>
</feature>
<feature type="helix" evidence="10">
    <location>
        <begin position="196"/>
        <end position="206"/>
    </location>
</feature>
<feature type="helix" evidence="10">
    <location>
        <begin position="208"/>
        <end position="210"/>
    </location>
</feature>
<feature type="helix" evidence="10">
    <location>
        <begin position="211"/>
        <end position="219"/>
    </location>
</feature>
<feature type="strand" evidence="10">
    <location>
        <begin position="223"/>
        <end position="227"/>
    </location>
</feature>
<feature type="strand" evidence="10">
    <location>
        <begin position="230"/>
        <end position="235"/>
    </location>
</feature>
<feature type="helix" evidence="10">
    <location>
        <begin position="237"/>
        <end position="251"/>
    </location>
</feature>
<feature type="helix" evidence="10">
    <location>
        <begin position="256"/>
        <end position="271"/>
    </location>
</feature>
<accession>Q99216</accession>
<accession>D6W2K3</accession>
<accession>Q02462</accession>
<accession>Q7LHP7</accession>
<proteinExistence type="evidence at protein level"/>
<gene>
    <name type="primary">PNO1</name>
    <name type="synonym">DIM2</name>
    <name type="synonym">RRP20</name>
    <name type="ordered locus">YOR145C</name>
    <name type="ORF">O3513</name>
    <name type="ORF">YOR3513C</name>
</gene>
<reference key="1">
    <citation type="journal article" date="1997" name="Yeast">
        <title>Analysis of a 35.6 kb region on the right arm of Saccharomyces cerevisiae chromosome XV.</title>
        <authorList>
            <person name="Bordonne R."/>
            <person name="Camasses A."/>
            <person name="Madania A."/>
            <person name="Poch O."/>
            <person name="Tarassov I.A."/>
            <person name="Winsor B."/>
            <person name="Martin R.P."/>
        </authorList>
    </citation>
    <scope>NUCLEOTIDE SEQUENCE [GENOMIC DNA]</scope>
    <source>
        <strain>S288c / FY1678</strain>
    </source>
</reference>
<reference key="2">
    <citation type="journal article" date="1997" name="Nature">
        <title>The nucleotide sequence of Saccharomyces cerevisiae chromosome XV.</title>
        <authorList>
            <person name="Dujon B."/>
            <person name="Albermann K."/>
            <person name="Aldea M."/>
            <person name="Alexandraki D."/>
            <person name="Ansorge W."/>
            <person name="Arino J."/>
            <person name="Benes V."/>
            <person name="Bohn C."/>
            <person name="Bolotin-Fukuhara M."/>
            <person name="Bordonne R."/>
            <person name="Boyer J."/>
            <person name="Camasses A."/>
            <person name="Casamayor A."/>
            <person name="Casas C."/>
            <person name="Cheret G."/>
            <person name="Cziepluch C."/>
            <person name="Daignan-Fornier B."/>
            <person name="Dang V.-D."/>
            <person name="de Haan M."/>
            <person name="Delius H."/>
            <person name="Durand P."/>
            <person name="Fairhead C."/>
            <person name="Feldmann H."/>
            <person name="Gaillon L."/>
            <person name="Galisson F."/>
            <person name="Gamo F.-J."/>
            <person name="Gancedo C."/>
            <person name="Goffeau A."/>
            <person name="Goulding S.E."/>
            <person name="Grivell L.A."/>
            <person name="Habbig B."/>
            <person name="Hand N.J."/>
            <person name="Hani J."/>
            <person name="Hattenhorst U."/>
            <person name="Hebling U."/>
            <person name="Hernando Y."/>
            <person name="Herrero E."/>
            <person name="Heumann K."/>
            <person name="Hiesel R."/>
            <person name="Hilger F."/>
            <person name="Hofmann B."/>
            <person name="Hollenberg C.P."/>
            <person name="Hughes B."/>
            <person name="Jauniaux J.-C."/>
            <person name="Kalogeropoulos A."/>
            <person name="Katsoulou C."/>
            <person name="Kordes E."/>
            <person name="Lafuente M.J."/>
            <person name="Landt O."/>
            <person name="Louis E.J."/>
            <person name="Maarse A.C."/>
            <person name="Madania A."/>
            <person name="Mannhaupt G."/>
            <person name="Marck C."/>
            <person name="Martin R.P."/>
            <person name="Mewes H.-W."/>
            <person name="Michaux G."/>
            <person name="Paces V."/>
            <person name="Parle-McDermott A.G."/>
            <person name="Pearson B.M."/>
            <person name="Perrin A."/>
            <person name="Pettersson B."/>
            <person name="Poch O."/>
            <person name="Pohl T.M."/>
            <person name="Poirey R."/>
            <person name="Portetelle D."/>
            <person name="Pujol A."/>
            <person name="Purnelle B."/>
            <person name="Ramezani Rad M."/>
            <person name="Rechmann S."/>
            <person name="Schwager C."/>
            <person name="Schweizer M."/>
            <person name="Sor F."/>
            <person name="Sterky F."/>
            <person name="Tarassov I.A."/>
            <person name="Teodoru C."/>
            <person name="Tettelin H."/>
            <person name="Thierry A."/>
            <person name="Tobiasch E."/>
            <person name="Tzermia M."/>
            <person name="Uhlen M."/>
            <person name="Unseld M."/>
            <person name="Valens M."/>
            <person name="Vandenbol M."/>
            <person name="Vetter I."/>
            <person name="Vlcek C."/>
            <person name="Voet M."/>
            <person name="Volckaert G."/>
            <person name="Voss H."/>
            <person name="Wambutt R."/>
            <person name="Wedler H."/>
            <person name="Wiemann S."/>
            <person name="Winsor B."/>
            <person name="Wolfe K.H."/>
            <person name="Zollner A."/>
            <person name="Zumstein E."/>
            <person name="Kleine K."/>
        </authorList>
    </citation>
    <scope>NUCLEOTIDE SEQUENCE [LARGE SCALE GENOMIC DNA]</scope>
    <source>
        <strain>ATCC 204508 / S288c</strain>
    </source>
</reference>
<reference key="3">
    <citation type="journal article" date="2014" name="G3 (Bethesda)">
        <title>The reference genome sequence of Saccharomyces cerevisiae: Then and now.</title>
        <authorList>
            <person name="Engel S.R."/>
            <person name="Dietrich F.S."/>
            <person name="Fisk D.G."/>
            <person name="Binkley G."/>
            <person name="Balakrishnan R."/>
            <person name="Costanzo M.C."/>
            <person name="Dwight S.S."/>
            <person name="Hitz B.C."/>
            <person name="Karra K."/>
            <person name="Nash R.S."/>
            <person name="Weng S."/>
            <person name="Wong E.D."/>
            <person name="Lloyd P."/>
            <person name="Skrzypek M.S."/>
            <person name="Miyasato S.R."/>
            <person name="Simison M."/>
            <person name="Cherry J.M."/>
        </authorList>
    </citation>
    <scope>GENOME REANNOTATION</scope>
    <source>
        <strain>ATCC 204508 / S288c</strain>
    </source>
</reference>
<reference key="4">
    <citation type="journal article" date="1997" name="Yeast">
        <title>DNA sequencing and analysis of 130 kb from yeast chromosome XV.</title>
        <authorList>
            <person name="Voss H."/>
            <person name="Benes V."/>
            <person name="Andrade M.A."/>
            <person name="Valencia A."/>
            <person name="Rechmann S."/>
            <person name="Teodoru C."/>
            <person name="Schwager C."/>
            <person name="Paces V."/>
            <person name="Sander C."/>
            <person name="Ansorge W."/>
        </authorList>
    </citation>
    <scope>NUCLEOTIDE SEQUENCE [GENOMIC DNA] OF 57-274</scope>
</reference>
<reference key="5">
    <citation type="journal article" date="2000" name="Yeast">
        <title>Functional analysis of six genes from chromosomes XIV and XV of Saccharomyces cerevisiae reveals YOR145c as an essential gene and YNL059c/ARP5 as a strain-dependent essential gene encoding nuclear proteins.</title>
        <authorList>
            <person name="Grava S."/>
            <person name="Dumoulin P."/>
            <person name="Madania A."/>
            <person name="Tarassov I."/>
            <person name="Winsor B."/>
        </authorList>
    </citation>
    <scope>SUBCELLULAR LOCATION</scope>
    <source>
        <strain>ATCC 96604 / S288c / FY1679</strain>
    </source>
</reference>
<reference key="6">
    <citation type="journal article" date="2002" name="Genes Dev.">
        <title>Nob1p is required for biogenesis of the 26S proteasome and degraded upon its maturation in Saccharomyces cerevisiae.</title>
        <authorList>
            <person name="Tone Y."/>
            <person name="Toh-e A."/>
        </authorList>
    </citation>
    <scope>FUNCTION</scope>
    <scope>INTERACTION WITH NOB1</scope>
    <scope>MUTAGENESIS OF GLY-203</scope>
</reference>
<reference key="7">
    <citation type="journal article" date="2003" name="EMBO J.">
        <title>The path from nucleolar 90S to cytoplasmic 40S pre-ribosomes.</title>
        <authorList>
            <person name="Schaefer T."/>
            <person name="Strauss D."/>
            <person name="Petfalski E."/>
            <person name="Tollervey D."/>
            <person name="Hurt E."/>
        </authorList>
    </citation>
    <scope>SUBCELLULAR LOCATION</scope>
</reference>
<reference key="8">
    <citation type="journal article" date="2003" name="Nucleic Acids Res.">
        <title>RRP20, a component of the 90S preribosome, is required for pre-18S rRNA processing in Saccharomyces cerevisiae.</title>
        <authorList>
            <person name="Senapin S."/>
            <person name="Clark-Walker G.D."/>
            <person name="Chen X.J."/>
            <person name="Seraphin B."/>
            <person name="Daugeron M.-C."/>
        </authorList>
    </citation>
    <scope>FUNCTION</scope>
    <scope>MUTAGENESIS OF GLY-235</scope>
</reference>
<reference key="9">
    <citation type="journal article" date="2004" name="RNA">
        <title>Dim2p, a KH-domain protein required for small ribosomal subunit synthesis.</title>
        <authorList>
            <person name="Vanrobays E."/>
            <person name="Gelugne J.-P."/>
            <person name="Caizergues-Ferrer M."/>
            <person name="Lafontaine D.L.J."/>
        </authorList>
    </citation>
    <scope>FUNCTION</scope>
    <scope>SUBUNIT</scope>
    <scope>SUBCELLULAR LOCATION</scope>
</reference>
<reference key="10">
    <citation type="journal article" date="2009" name="Science">
        <title>Global analysis of Cdk1 substrate phosphorylation sites provides insights into evolution.</title>
        <authorList>
            <person name="Holt L.J."/>
            <person name="Tuch B.B."/>
            <person name="Villen J."/>
            <person name="Johnson A.D."/>
            <person name="Gygi S.P."/>
            <person name="Morgan D.O."/>
        </authorList>
    </citation>
    <scope>PHOSPHORYLATION [LARGE SCALE ANALYSIS] AT SER-47 AND THR-51</scope>
    <scope>IDENTIFICATION BY MASS SPECTROMETRY [LARGE SCALE ANALYSIS]</scope>
</reference>
<reference key="11">
    <citation type="journal article" date="2012" name="Proc. Natl. Acad. Sci. U.S.A.">
        <title>N-terminal acetylome analyses and functional insights of the N-terminal acetyltransferase NatB.</title>
        <authorList>
            <person name="Van Damme P."/>
            <person name="Lasa M."/>
            <person name="Polevoda B."/>
            <person name="Gazquez C."/>
            <person name="Elosegui-Artola A."/>
            <person name="Kim D.S."/>
            <person name="De Juan-Pardo E."/>
            <person name="Demeyer K."/>
            <person name="Hole K."/>
            <person name="Larrea E."/>
            <person name="Timmerman E."/>
            <person name="Prieto J."/>
            <person name="Arnesen T."/>
            <person name="Sherman F."/>
            <person name="Gevaert K."/>
            <person name="Aldabe R."/>
        </authorList>
    </citation>
    <scope>IDENTIFICATION BY MASS SPECTROMETRY [LARGE SCALE ANALYSIS]</scope>
</reference>
<evidence type="ECO:0000256" key="1">
    <source>
        <dbReference type="SAM" id="MobiDB-lite"/>
    </source>
</evidence>
<evidence type="ECO:0000269" key="2">
    <source>
    </source>
</evidence>
<evidence type="ECO:0000269" key="3">
    <source>
    </source>
</evidence>
<evidence type="ECO:0000269" key="4">
    <source>
    </source>
</evidence>
<evidence type="ECO:0000269" key="5">
    <source>
    </source>
</evidence>
<evidence type="ECO:0000269" key="6">
    <source>
    </source>
</evidence>
<evidence type="ECO:0000305" key="7"/>
<evidence type="ECO:0007744" key="8">
    <source>
    </source>
</evidence>
<evidence type="ECO:0007829" key="9">
    <source>
        <dbReference type="PDB" id="8C00"/>
    </source>
</evidence>
<evidence type="ECO:0007829" key="10">
    <source>
        <dbReference type="PDB" id="8C01"/>
    </source>
</evidence>
<dbReference type="EMBL" id="U55020">
    <property type="protein sequence ID" value="AAC49632.1"/>
    <property type="molecule type" value="Genomic_DNA"/>
</dbReference>
<dbReference type="EMBL" id="Z75053">
    <property type="protein sequence ID" value="CAA99349.1"/>
    <property type="molecule type" value="Genomic_DNA"/>
</dbReference>
<dbReference type="EMBL" id="X94335">
    <property type="protein sequence ID" value="CAA64063.1"/>
    <property type="molecule type" value="Genomic_DNA"/>
</dbReference>
<dbReference type="EMBL" id="BK006948">
    <property type="protein sequence ID" value="DAA10919.1"/>
    <property type="molecule type" value="Genomic_DNA"/>
</dbReference>
<dbReference type="PIR" id="S67033">
    <property type="entry name" value="S67033"/>
</dbReference>
<dbReference type="RefSeq" id="NP_014788.1">
    <property type="nucleotide sequence ID" value="NM_001183564.1"/>
</dbReference>
<dbReference type="PDB" id="5WLC">
    <property type="method" value="EM"/>
    <property type="resolution" value="3.80 A"/>
    <property type="chains" value="SO=1-274"/>
</dbReference>
<dbReference type="PDB" id="5WYJ">
    <property type="method" value="EM"/>
    <property type="resolution" value="8.70 A"/>
    <property type="chains" value="P1=1-274"/>
</dbReference>
<dbReference type="PDB" id="5WYK">
    <property type="method" value="EM"/>
    <property type="resolution" value="4.50 A"/>
    <property type="chains" value="P1=1-274"/>
</dbReference>
<dbReference type="PDB" id="6EML">
    <property type="method" value="EM"/>
    <property type="resolution" value="3.60 A"/>
    <property type="chains" value="p=1-274"/>
</dbReference>
<dbReference type="PDB" id="6FAI">
    <property type="method" value="EM"/>
    <property type="resolution" value="3.40 A"/>
    <property type="chains" value="h=1-274"/>
</dbReference>
<dbReference type="PDB" id="6RBD">
    <property type="method" value="EM"/>
    <property type="resolution" value="3.47 A"/>
    <property type="chains" value="h=1-274"/>
</dbReference>
<dbReference type="PDB" id="6Y7C">
    <property type="method" value="EM"/>
    <property type="resolution" value="3.80 A"/>
    <property type="chains" value="h=1-274"/>
</dbReference>
<dbReference type="PDB" id="6ZQA">
    <property type="method" value="EM"/>
    <property type="resolution" value="4.40 A"/>
    <property type="chains" value="JJ=1-274"/>
</dbReference>
<dbReference type="PDB" id="6ZQB">
    <property type="method" value="EM"/>
    <property type="resolution" value="3.90 A"/>
    <property type="chains" value="JJ=1-274"/>
</dbReference>
<dbReference type="PDB" id="6ZQC">
    <property type="method" value="EM"/>
    <property type="resolution" value="3.80 A"/>
    <property type="chains" value="JJ=1-274"/>
</dbReference>
<dbReference type="PDB" id="6ZQD">
    <property type="method" value="EM"/>
    <property type="resolution" value="3.80 A"/>
    <property type="chains" value="JJ=1-274"/>
</dbReference>
<dbReference type="PDB" id="6ZQE">
    <property type="method" value="EM"/>
    <property type="resolution" value="7.10 A"/>
    <property type="chains" value="JJ=1-274"/>
</dbReference>
<dbReference type="PDB" id="6ZQF">
    <property type="method" value="EM"/>
    <property type="resolution" value="4.90 A"/>
    <property type="chains" value="JJ=1-274"/>
</dbReference>
<dbReference type="PDB" id="6ZQG">
    <property type="method" value="EM"/>
    <property type="resolution" value="3.50 A"/>
    <property type="chains" value="JJ=1-274"/>
</dbReference>
<dbReference type="PDB" id="7AJT">
    <property type="method" value="EM"/>
    <property type="resolution" value="4.60 A"/>
    <property type="chains" value="JJ=1-274"/>
</dbReference>
<dbReference type="PDB" id="7AJU">
    <property type="method" value="EM"/>
    <property type="resolution" value="3.80 A"/>
    <property type="chains" value="JJ=1-274"/>
</dbReference>
<dbReference type="PDB" id="7SUK">
    <property type="method" value="EM"/>
    <property type="resolution" value="3.99 A"/>
    <property type="chains" value="SO=96-274"/>
</dbReference>
<dbReference type="PDB" id="7WTL">
    <property type="method" value="EM"/>
    <property type="resolution" value="3.30 A"/>
    <property type="chains" value="CA=1-274"/>
</dbReference>
<dbReference type="PDB" id="7WTM">
    <property type="method" value="EM"/>
    <property type="resolution" value="3.50 A"/>
    <property type="chains" value="CA=1-274"/>
</dbReference>
<dbReference type="PDB" id="7WTN">
    <property type="method" value="EM"/>
    <property type="resolution" value="3.40 A"/>
    <property type="chains" value="CA=1-274"/>
</dbReference>
<dbReference type="PDB" id="7WTO">
    <property type="method" value="EM"/>
    <property type="resolution" value="3.50 A"/>
    <property type="chains" value="CA=1-274"/>
</dbReference>
<dbReference type="PDB" id="7WTP">
    <property type="method" value="EM"/>
    <property type="resolution" value="3.80 A"/>
    <property type="chains" value="CA=1-274"/>
</dbReference>
<dbReference type="PDB" id="7WTQ">
    <property type="method" value="EM"/>
    <property type="resolution" value="3.70 A"/>
    <property type="chains" value="CA=1-274"/>
</dbReference>
<dbReference type="PDB" id="7WTR">
    <property type="method" value="EM"/>
    <property type="resolution" value="3.50 A"/>
    <property type="chains" value="CA=1-274"/>
</dbReference>
<dbReference type="PDB" id="8C00">
    <property type="method" value="EM"/>
    <property type="resolution" value="2.90 A"/>
    <property type="chains" value="p=1-274"/>
</dbReference>
<dbReference type="PDB" id="8C01">
    <property type="method" value="EM"/>
    <property type="resolution" value="2.70 A"/>
    <property type="chains" value="p=1-274"/>
</dbReference>
<dbReference type="PDB" id="8CBJ">
    <property type="method" value="EM"/>
    <property type="resolution" value="3.80 A"/>
    <property type="chains" value="h=1-274"/>
</dbReference>
<dbReference type="PDBsum" id="5WLC"/>
<dbReference type="PDBsum" id="5WYJ"/>
<dbReference type="PDBsum" id="5WYK"/>
<dbReference type="PDBsum" id="6EML"/>
<dbReference type="PDBsum" id="6FAI"/>
<dbReference type="PDBsum" id="6RBD"/>
<dbReference type="PDBsum" id="6Y7C"/>
<dbReference type="PDBsum" id="6ZQA"/>
<dbReference type="PDBsum" id="6ZQB"/>
<dbReference type="PDBsum" id="6ZQC"/>
<dbReference type="PDBsum" id="6ZQD"/>
<dbReference type="PDBsum" id="6ZQE"/>
<dbReference type="PDBsum" id="6ZQF"/>
<dbReference type="PDBsum" id="6ZQG"/>
<dbReference type="PDBsum" id="7AJT"/>
<dbReference type="PDBsum" id="7AJU"/>
<dbReference type="PDBsum" id="7SUK"/>
<dbReference type="PDBsum" id="7WTL"/>
<dbReference type="PDBsum" id="7WTM"/>
<dbReference type="PDBsum" id="7WTN"/>
<dbReference type="PDBsum" id="7WTO"/>
<dbReference type="PDBsum" id="7WTP"/>
<dbReference type="PDBsum" id="7WTQ"/>
<dbReference type="PDBsum" id="7WTR"/>
<dbReference type="PDBsum" id="8C00"/>
<dbReference type="PDBsum" id="8C01"/>
<dbReference type="PDBsum" id="8CBJ"/>
<dbReference type="EMDB" id="EMD-10713"/>
<dbReference type="EMDB" id="EMD-11357"/>
<dbReference type="EMDB" id="EMD-11358"/>
<dbReference type="EMDB" id="EMD-11359"/>
<dbReference type="EMDB" id="EMD-11360"/>
<dbReference type="EMDB" id="EMD-11361"/>
<dbReference type="EMDB" id="EMD-11362"/>
<dbReference type="EMDB" id="EMD-11363"/>
<dbReference type="EMDB" id="EMD-11807"/>
<dbReference type="EMDB" id="EMD-11808"/>
<dbReference type="EMDB" id="EMD-16347"/>
<dbReference type="EMDB" id="EMD-16349"/>
<dbReference type="EMDB" id="EMD-25441"/>
<dbReference type="EMDB" id="EMD-32790"/>
<dbReference type="EMDB" id="EMD-32791"/>
<dbReference type="EMDB" id="EMD-32792"/>
<dbReference type="EMDB" id="EMD-32793"/>
<dbReference type="EMDB" id="EMD-32794"/>
<dbReference type="EMDB" id="EMD-32795"/>
<dbReference type="EMDB" id="EMD-32796"/>
<dbReference type="EMDB" id="EMD-4214"/>
<dbReference type="EMDB" id="EMD-4792"/>
<dbReference type="EMDB" id="EMD-6695"/>
<dbReference type="EMDB" id="EMD-6696"/>
<dbReference type="EMDB" id="EMD-8859"/>
<dbReference type="SMR" id="Q99216"/>
<dbReference type="BioGRID" id="34542">
    <property type="interactions" value="155"/>
</dbReference>
<dbReference type="ComplexPortal" id="CPX-1604">
    <property type="entry name" value="Small ribosomal subunit processome"/>
</dbReference>
<dbReference type="DIP" id="DIP-4687N"/>
<dbReference type="FunCoup" id="Q99216">
    <property type="interactions" value="1121"/>
</dbReference>
<dbReference type="IntAct" id="Q99216">
    <property type="interactions" value="64"/>
</dbReference>
<dbReference type="MINT" id="Q99216"/>
<dbReference type="STRING" id="4932.YOR145C"/>
<dbReference type="GlyGen" id="Q99216">
    <property type="glycosylation" value="1 site, 1 O-linked glycan (1 site)"/>
</dbReference>
<dbReference type="iPTMnet" id="Q99216"/>
<dbReference type="PaxDb" id="4932-YOR145C"/>
<dbReference type="PeptideAtlas" id="Q99216"/>
<dbReference type="EnsemblFungi" id="YOR145C_mRNA">
    <property type="protein sequence ID" value="YOR145C"/>
    <property type="gene ID" value="YOR145C"/>
</dbReference>
<dbReference type="GeneID" id="854317"/>
<dbReference type="KEGG" id="sce:YOR145C"/>
<dbReference type="AGR" id="SGD:S000005671"/>
<dbReference type="SGD" id="S000005671">
    <property type="gene designation" value="PNO1"/>
</dbReference>
<dbReference type="VEuPathDB" id="FungiDB:YOR145C"/>
<dbReference type="eggNOG" id="KOG3273">
    <property type="taxonomic scope" value="Eukaryota"/>
</dbReference>
<dbReference type="GeneTree" id="ENSGT00390000018052"/>
<dbReference type="HOGENOM" id="CLU_064992_0_2_1"/>
<dbReference type="InParanoid" id="Q99216"/>
<dbReference type="OMA" id="TPLRNNW"/>
<dbReference type="OrthoDB" id="1932641at2759"/>
<dbReference type="BioCyc" id="YEAST:G3O-33664-MONOMER"/>
<dbReference type="BioGRID-ORCS" id="854317">
    <property type="hits" value="0 hits in 10 CRISPR screens"/>
</dbReference>
<dbReference type="PRO" id="PR:Q99216"/>
<dbReference type="Proteomes" id="UP000002311">
    <property type="component" value="Chromosome XV"/>
</dbReference>
<dbReference type="RNAct" id="Q99216">
    <property type="molecule type" value="protein"/>
</dbReference>
<dbReference type="GO" id="GO:0030686">
    <property type="term" value="C:90S preribosome"/>
    <property type="evidence" value="ECO:0007005"/>
    <property type="project" value="SGD"/>
</dbReference>
<dbReference type="GO" id="GO:0005737">
    <property type="term" value="C:cytoplasm"/>
    <property type="evidence" value="ECO:0007669"/>
    <property type="project" value="UniProtKB-SubCell"/>
</dbReference>
<dbReference type="GO" id="GO:0005730">
    <property type="term" value="C:nucleolus"/>
    <property type="evidence" value="ECO:0000314"/>
    <property type="project" value="SGD"/>
</dbReference>
<dbReference type="GO" id="GO:0005634">
    <property type="term" value="C:nucleus"/>
    <property type="evidence" value="ECO:0000314"/>
    <property type="project" value="SGD"/>
</dbReference>
<dbReference type="GO" id="GO:0042134">
    <property type="term" value="F:rRNA primary transcript binding"/>
    <property type="evidence" value="ECO:0000314"/>
    <property type="project" value="SGD"/>
</dbReference>
<dbReference type="GO" id="GO:0051082">
    <property type="term" value="F:unfolded protein binding"/>
    <property type="evidence" value="ECO:0000314"/>
    <property type="project" value="SGD"/>
</dbReference>
<dbReference type="GO" id="GO:0000447">
    <property type="term" value="P:endonucleolytic cleavage in ITS1 to separate SSU-rRNA from 5.8S rRNA and LSU-rRNA from tricistronic rRNA transcript (SSU-rRNA, 5.8S rRNA, LSU-rRNA)"/>
    <property type="evidence" value="ECO:0000315"/>
    <property type="project" value="SGD"/>
</dbReference>
<dbReference type="GO" id="GO:0000472">
    <property type="term" value="P:endonucleolytic cleavage to generate mature 5'-end of SSU-rRNA from (SSU-rRNA, 5.8S rRNA, LSU-rRNA)"/>
    <property type="evidence" value="ECO:0000315"/>
    <property type="project" value="SGD"/>
</dbReference>
<dbReference type="GO" id="GO:0043248">
    <property type="term" value="P:proteasome assembly"/>
    <property type="evidence" value="ECO:0000315"/>
    <property type="project" value="SGD"/>
</dbReference>
<dbReference type="GO" id="GO:0000056">
    <property type="term" value="P:ribosomal small subunit export from nucleus"/>
    <property type="evidence" value="ECO:0000315"/>
    <property type="project" value="SGD"/>
</dbReference>
<dbReference type="GO" id="GO:0042255">
    <property type="term" value="P:ribosome assembly"/>
    <property type="evidence" value="ECO:0000315"/>
    <property type="project" value="SGD"/>
</dbReference>
<dbReference type="CDD" id="cd22391">
    <property type="entry name" value="KH-I_PNO1_rpt1"/>
    <property type="match status" value="1"/>
</dbReference>
<dbReference type="CDD" id="cd22392">
    <property type="entry name" value="KH-I_PNO1_rpt2"/>
    <property type="match status" value="1"/>
</dbReference>
<dbReference type="FunFam" id="3.30.1370.10:FF:000009">
    <property type="entry name" value="RNA-binding protein PNO1"/>
    <property type="match status" value="1"/>
</dbReference>
<dbReference type="Gene3D" id="3.30.1370.10">
    <property type="entry name" value="K Homology domain, type 1"/>
    <property type="match status" value="1"/>
</dbReference>
<dbReference type="InterPro" id="IPR055212">
    <property type="entry name" value="KH-I_PNO1_first"/>
</dbReference>
<dbReference type="InterPro" id="IPR036612">
    <property type="entry name" value="KH_dom_type_1_sf"/>
</dbReference>
<dbReference type="InterPro" id="IPR055211">
    <property type="entry name" value="KH_PNO1_2nd"/>
</dbReference>
<dbReference type="InterPro" id="IPR041174">
    <property type="entry name" value="KRR1-like_KH1"/>
</dbReference>
<dbReference type="PANTHER" id="PTHR12826">
    <property type="entry name" value="RIBONUCLEASE Y"/>
    <property type="match status" value="1"/>
</dbReference>
<dbReference type="PANTHER" id="PTHR12826:SF13">
    <property type="entry name" value="RNA-BINDING PROTEIN PNO1"/>
    <property type="match status" value="1"/>
</dbReference>
<dbReference type="Pfam" id="PF17903">
    <property type="entry name" value="KH_KRR1_1st"/>
    <property type="match status" value="1"/>
</dbReference>
<dbReference type="Pfam" id="PF22891">
    <property type="entry name" value="KH_PNO1_2nd"/>
    <property type="match status" value="1"/>
</dbReference>
<dbReference type="SUPFAM" id="SSF54791">
    <property type="entry name" value="Eukaryotic type KH-domain (KH-domain type I)"/>
    <property type="match status" value="1"/>
</dbReference>
<name>PNO1_YEAST</name>
<comment type="function">
    <text evidence="3 5 6">Required for small ribosomal subunit (SSU) synthesis. Has a role in the processing of early nucleolar and late cytoplasmic pre-RNA species. Recruits DIM1 to nucleolar pre-RNAs. Indirectly required for cleavage at the A2 site of the 20S pre-rRNA, forming 18S rRNA, and at A1 and A2 sites of other pre-rRNAs.</text>
</comment>
<comment type="subunit">
    <text evidence="3 6">Component of the small ribosomal subunit, ribosomal RNA processing complex (SSU RRP complex). Interacts with NOB1.</text>
</comment>
<comment type="subcellular location">
    <subcellularLocation>
        <location evidence="4 6">Cytoplasm</location>
    </subcellularLocation>
    <subcellularLocation>
        <location evidence="2 6">Nucleus</location>
        <location evidence="2 6">Nucleolus</location>
    </subcellularLocation>
</comment>
<comment type="similarity">
    <text evidence="7">Belongs to the PNO1 family.</text>
</comment>
<organism>
    <name type="scientific">Saccharomyces cerevisiae (strain ATCC 204508 / S288c)</name>
    <name type="common">Baker's yeast</name>
    <dbReference type="NCBI Taxonomy" id="559292"/>
    <lineage>
        <taxon>Eukaryota</taxon>
        <taxon>Fungi</taxon>
        <taxon>Dikarya</taxon>
        <taxon>Ascomycota</taxon>
        <taxon>Saccharomycotina</taxon>
        <taxon>Saccharomycetes</taxon>
        <taxon>Saccharomycetales</taxon>
        <taxon>Saccharomycetaceae</taxon>
        <taxon>Saccharomyces</taxon>
    </lineage>
</organism>